<keyword id="KW-0378">Hydrolase</keyword>
<keyword id="KW-0719">Serine esterase</keyword>
<dbReference type="EC" id="3.1.1.1" evidence="1"/>
<dbReference type="EMBL" id="CP000886">
    <property type="protein sequence ID" value="ABX68644.1"/>
    <property type="molecule type" value="Genomic_DNA"/>
</dbReference>
<dbReference type="RefSeq" id="WP_000189588.1">
    <property type="nucleotide sequence ID" value="NC_010102.1"/>
</dbReference>
<dbReference type="SMR" id="A9MY08"/>
<dbReference type="ESTHER" id="salty-yafa">
    <property type="family name" value="Duf_1100-R"/>
</dbReference>
<dbReference type="KEGG" id="spq:SPAB_03284"/>
<dbReference type="PATRIC" id="fig|1016998.12.peg.3102"/>
<dbReference type="HOGENOM" id="CLU_036819_0_0_6"/>
<dbReference type="BioCyc" id="SENT1016998:SPAB_RS13430-MONOMER"/>
<dbReference type="Proteomes" id="UP000008556">
    <property type="component" value="Chromosome"/>
</dbReference>
<dbReference type="GO" id="GO:0106435">
    <property type="term" value="F:carboxylesterase activity"/>
    <property type="evidence" value="ECO:0007669"/>
    <property type="project" value="UniProtKB-EC"/>
</dbReference>
<dbReference type="FunFam" id="3.40.50.1820:FF:000022">
    <property type="entry name" value="Esterase FrsA"/>
    <property type="match status" value="1"/>
</dbReference>
<dbReference type="Gene3D" id="3.40.50.1820">
    <property type="entry name" value="alpha/beta hydrolase"/>
    <property type="match status" value="1"/>
</dbReference>
<dbReference type="HAMAP" id="MF_01063">
    <property type="entry name" value="FrsA"/>
    <property type="match status" value="1"/>
</dbReference>
<dbReference type="InterPro" id="IPR029058">
    <property type="entry name" value="AB_hydrolase_fold"/>
</dbReference>
<dbReference type="InterPro" id="IPR043423">
    <property type="entry name" value="FrsA"/>
</dbReference>
<dbReference type="InterPro" id="IPR010520">
    <property type="entry name" value="FrsA-like"/>
</dbReference>
<dbReference type="InterPro" id="IPR050261">
    <property type="entry name" value="FrsA_esterase"/>
</dbReference>
<dbReference type="NCBIfam" id="NF003460">
    <property type="entry name" value="PRK05077.1"/>
    <property type="match status" value="1"/>
</dbReference>
<dbReference type="PANTHER" id="PTHR22946">
    <property type="entry name" value="DIENELACTONE HYDROLASE DOMAIN-CONTAINING PROTEIN-RELATED"/>
    <property type="match status" value="1"/>
</dbReference>
<dbReference type="PANTHER" id="PTHR22946:SF4">
    <property type="entry name" value="ESTERASE FRSA"/>
    <property type="match status" value="1"/>
</dbReference>
<dbReference type="Pfam" id="PF06500">
    <property type="entry name" value="FrsA-like"/>
    <property type="match status" value="1"/>
</dbReference>
<dbReference type="SUPFAM" id="SSF53474">
    <property type="entry name" value="alpha/beta-Hydrolases"/>
    <property type="match status" value="1"/>
</dbReference>
<proteinExistence type="inferred from homology"/>
<sequence length="414" mass="47160">MTQANLSETLFKPRFKHTETSTLVRRFNRGSQPPMQSALDGKNVPHWYRMINRLMWIWRGVDPREILDVQARIVMSDAERTDDDLYDTVIGYRGGNWIYEWAKQAMDWQQKACQEQDAMRSGRYWLHASTLYNIAAYPHLKGDELAEQAQALANRAYEEAAQRLPGSLREMEFAVPGGSPVTAFLHMPKGDGPFPTVLMCGGLDAMQTDYYTLYERYFAPRGIAMLTLDMPSVGFSSKWKLTQDSSLLHQHVLKALPNVPWVDHTRVAAFGFRFGANVAVRLAYLEAPRLKAVACLGPVVHALLSDPQRQSTVPEMYLDVLASRLGMHDASDEALRVELNRYSLKVQGLLGRRCPTPMLSGFWKNDPFSPEEESRLITTSSSDGKLIEIPFNPVYRNFDRALQEITDWINHRLC</sequence>
<evidence type="ECO:0000255" key="1">
    <source>
        <dbReference type="HAMAP-Rule" id="MF_01063"/>
    </source>
</evidence>
<protein>
    <recommendedName>
        <fullName evidence="1">Esterase FrsA</fullName>
        <ecNumber evidence="1">3.1.1.1</ecNumber>
    </recommendedName>
</protein>
<accession>A9MY08</accession>
<gene>
    <name evidence="1" type="primary">frsA</name>
    <name type="ordered locus">SPAB_03284</name>
</gene>
<reference key="1">
    <citation type="submission" date="2007-11" db="EMBL/GenBank/DDBJ databases">
        <authorList>
            <consortium name="The Salmonella enterica serovar Paratyphi B Genome Sequencing Project"/>
            <person name="McClelland M."/>
            <person name="Sanderson E.K."/>
            <person name="Porwollik S."/>
            <person name="Spieth J."/>
            <person name="Clifton W.S."/>
            <person name="Fulton R."/>
            <person name="Cordes M."/>
            <person name="Wollam A."/>
            <person name="Shah N."/>
            <person name="Pepin K."/>
            <person name="Bhonagiri V."/>
            <person name="Nash W."/>
            <person name="Johnson M."/>
            <person name="Thiruvilangam P."/>
            <person name="Wilson R."/>
        </authorList>
    </citation>
    <scope>NUCLEOTIDE SEQUENCE [LARGE SCALE GENOMIC DNA]</scope>
    <source>
        <strain>ATCC BAA-1250 / SPB7</strain>
    </source>
</reference>
<feature type="chain" id="PRO_1000084483" description="Esterase FrsA">
    <location>
        <begin position="1"/>
        <end position="414"/>
    </location>
</feature>
<name>FRSA_SALPB</name>
<comment type="function">
    <text evidence="1">Catalyzes the hydrolysis of esters.</text>
</comment>
<comment type="catalytic activity">
    <reaction evidence="1">
        <text>a carboxylic ester + H2O = an alcohol + a carboxylate + H(+)</text>
        <dbReference type="Rhea" id="RHEA:21164"/>
        <dbReference type="ChEBI" id="CHEBI:15377"/>
        <dbReference type="ChEBI" id="CHEBI:15378"/>
        <dbReference type="ChEBI" id="CHEBI:29067"/>
        <dbReference type="ChEBI" id="CHEBI:30879"/>
        <dbReference type="ChEBI" id="CHEBI:33308"/>
        <dbReference type="EC" id="3.1.1.1"/>
    </reaction>
</comment>
<comment type="similarity">
    <text evidence="1">Belongs to the FrsA family.</text>
</comment>
<organism>
    <name type="scientific">Salmonella paratyphi B (strain ATCC BAA-1250 / SPB7)</name>
    <dbReference type="NCBI Taxonomy" id="1016998"/>
    <lineage>
        <taxon>Bacteria</taxon>
        <taxon>Pseudomonadati</taxon>
        <taxon>Pseudomonadota</taxon>
        <taxon>Gammaproteobacteria</taxon>
        <taxon>Enterobacterales</taxon>
        <taxon>Enterobacteriaceae</taxon>
        <taxon>Salmonella</taxon>
    </lineage>
</organism>